<reference key="1">
    <citation type="submission" date="2006-09" db="EMBL/GenBank/DDBJ databases">
        <title>Complete sequence of Rhodopseudomonas palustris BisA53.</title>
        <authorList>
            <consortium name="US DOE Joint Genome Institute"/>
            <person name="Copeland A."/>
            <person name="Lucas S."/>
            <person name="Lapidus A."/>
            <person name="Barry K."/>
            <person name="Detter J.C."/>
            <person name="Glavina del Rio T."/>
            <person name="Hammon N."/>
            <person name="Israni S."/>
            <person name="Dalin E."/>
            <person name="Tice H."/>
            <person name="Pitluck S."/>
            <person name="Chain P."/>
            <person name="Malfatti S."/>
            <person name="Shin M."/>
            <person name="Vergez L."/>
            <person name="Schmutz J."/>
            <person name="Larimer F."/>
            <person name="Land M."/>
            <person name="Hauser L."/>
            <person name="Pelletier D.A."/>
            <person name="Kyrpides N."/>
            <person name="Kim E."/>
            <person name="Harwood C.S."/>
            <person name="Oda Y."/>
            <person name="Richardson P."/>
        </authorList>
    </citation>
    <scope>NUCLEOTIDE SEQUENCE [LARGE SCALE GENOMIC DNA]</scope>
    <source>
        <strain>BisA53</strain>
    </source>
</reference>
<sequence length="89" mass="10146">MATSAAVKDEPATQFAKDQLKAIIERIERLEEEKKTISDDIRDVYAEAKGNGYDVKALRTIVRMRKQDADERAEQETILETYLQALGML</sequence>
<organism>
    <name type="scientific">Rhodopseudomonas palustris (strain BisA53)</name>
    <dbReference type="NCBI Taxonomy" id="316055"/>
    <lineage>
        <taxon>Bacteria</taxon>
        <taxon>Pseudomonadati</taxon>
        <taxon>Pseudomonadota</taxon>
        <taxon>Alphaproteobacteria</taxon>
        <taxon>Hyphomicrobiales</taxon>
        <taxon>Nitrobacteraceae</taxon>
        <taxon>Rhodopseudomonas</taxon>
    </lineage>
</organism>
<feature type="chain" id="PRO_1000083686" description="UPF0335 protein RPE_4107">
    <location>
        <begin position="1"/>
        <end position="89"/>
    </location>
</feature>
<proteinExistence type="inferred from homology"/>
<comment type="similarity">
    <text evidence="1">Belongs to the UPF0335 family.</text>
</comment>
<gene>
    <name type="ordered locus">RPE_4107</name>
</gene>
<protein>
    <recommendedName>
        <fullName evidence="1">UPF0335 protein RPE_4107</fullName>
    </recommendedName>
</protein>
<name>Y4107_RHOP5</name>
<accession>Q07J51</accession>
<evidence type="ECO:0000255" key="1">
    <source>
        <dbReference type="HAMAP-Rule" id="MF_00797"/>
    </source>
</evidence>
<dbReference type="EMBL" id="CP000463">
    <property type="protein sequence ID" value="ABJ08033.1"/>
    <property type="molecule type" value="Genomic_DNA"/>
</dbReference>
<dbReference type="SMR" id="Q07J51"/>
<dbReference type="STRING" id="316055.RPE_4107"/>
<dbReference type="KEGG" id="rpe:RPE_4107"/>
<dbReference type="eggNOG" id="COG3750">
    <property type="taxonomic scope" value="Bacteria"/>
</dbReference>
<dbReference type="HOGENOM" id="CLU_158651_2_0_5"/>
<dbReference type="OrthoDB" id="9813793at2"/>
<dbReference type="GO" id="GO:0003677">
    <property type="term" value="F:DNA binding"/>
    <property type="evidence" value="ECO:0007669"/>
    <property type="project" value="InterPro"/>
</dbReference>
<dbReference type="HAMAP" id="MF_00797">
    <property type="entry name" value="UPF0335"/>
    <property type="match status" value="1"/>
</dbReference>
<dbReference type="InterPro" id="IPR018753">
    <property type="entry name" value="GapR-like"/>
</dbReference>
<dbReference type="InterPro" id="IPR046367">
    <property type="entry name" value="GapR-like_DNA-bd"/>
</dbReference>
<dbReference type="NCBIfam" id="NF010247">
    <property type="entry name" value="PRK13694.1"/>
    <property type="match status" value="1"/>
</dbReference>
<dbReference type="Pfam" id="PF10073">
    <property type="entry name" value="GapR_DNA-bd"/>
    <property type="match status" value="1"/>
</dbReference>